<evidence type="ECO:0000250" key="1"/>
<evidence type="ECO:0000256" key="2">
    <source>
        <dbReference type="SAM" id="MobiDB-lite"/>
    </source>
</evidence>
<keyword id="KW-1035">Host cytoplasm</keyword>
<keyword id="KW-1048">Host nucleus</keyword>
<keyword id="KW-0509">mRNA transport</keyword>
<keyword id="KW-0694">RNA-binding</keyword>
<keyword id="KW-0813">Transport</keyword>
<reference key="1">
    <citation type="journal article" date="1989" name="Nature">
        <title>An African primate lentivirus (SIVsm) closely related to HIV-2.</title>
        <authorList>
            <person name="Hirsch V.M."/>
            <person name="Olmstead R.A."/>
            <person name="Murphey-Corb M."/>
            <person name="Purcell R.H."/>
            <person name="Johnson P.R."/>
        </authorList>
    </citation>
    <scope>NUCLEOTIDE SEQUENCE [GENOMIC DNA]</scope>
</reference>
<protein>
    <recommendedName>
        <fullName>Protein Rev</fullName>
    </recommendedName>
    <alternativeName>
        <fullName>Regulator of expression of viral proteins</fullName>
    </alternativeName>
</protein>
<organismHost>
    <name type="scientific">Cercopithecidae</name>
    <name type="common">Old World monkeys</name>
    <dbReference type="NCBI Taxonomy" id="9527"/>
</organismHost>
<comment type="function">
    <text evidence="1">Escorts unspliced or incompletely spliced viral pre-mRNAs (late transcripts) out of the nucleus of infected cells. These pre-mRNAs carry a recognition sequence called Rev responsive element (RRE) located in the env gene, that is not present in fully spliced viral mRNAs (early transcripts). This function is essential since most viral proteins are translated from unspliced or partially spliced pre-mRNAs which cannot exit the nucleus by the pathway used by fully processed cellular mRNAs (By similarity).</text>
</comment>
<comment type="subunit">
    <text evidence="1">Homomultimer; when bound to the RRE. Multimeric assembly is essential for activity (By similarity).</text>
</comment>
<comment type="subcellular location">
    <subcellularLocation>
        <location>Host nucleus</location>
        <location>Host nucleolus</location>
    </subcellularLocation>
    <subcellularLocation>
        <location>Host cytoplasm</location>
    </subcellularLocation>
    <text evidence="1">The presence of both nuclear import and nuclear export signals leads to continuous shuttling between the nucleus and cytoplasm.</text>
</comment>
<comment type="domain">
    <text evidence="1">The RNA-binding motif binds to the RRE, a stem-and-loop structure present in incompletely spliced viral pre-mRNAs. This region also contains the NLS which mediates nuclear localization. These overlapping functions prevent Rev bound to RRE from undesirable return to the nucleus. When Rev binds the RRE, the NLS becomes masked while the NES remains accessible (By similarity).</text>
</comment>
<sequence length="101" mass="11788">MSSTEEELRRRLRLIHFLHQTTDPYPQGPGTANQRRRRRRRWRQRWQQILALADRIYSFPDPPVDTPLDLAIQQLQGLAIEELPDPPTSAPEPLNDVAKSP</sequence>
<organism>
    <name type="scientific">Simian immunodeficiency virus (isolate F236/smH4)</name>
    <name type="common">SIV-sm</name>
    <name type="synonym">Simian immunodeficiency virus sooty mangabey monkey</name>
    <dbReference type="NCBI Taxonomy" id="11737"/>
    <lineage>
        <taxon>Viruses</taxon>
        <taxon>Riboviria</taxon>
        <taxon>Pararnavirae</taxon>
        <taxon>Artverviricota</taxon>
        <taxon>Revtraviricetes</taxon>
        <taxon>Ortervirales</taxon>
        <taxon>Retroviridae</taxon>
        <taxon>Orthoretrovirinae</taxon>
        <taxon>Lentivirus</taxon>
        <taxon>Simian immunodeficiency virus</taxon>
    </lineage>
</organism>
<dbReference type="EMBL" id="X14307">
    <property type="status" value="NOT_ANNOTATED_CDS"/>
    <property type="molecule type" value="Genomic_DNA"/>
</dbReference>
<dbReference type="SMR" id="P12486"/>
<dbReference type="Proteomes" id="UP000008173">
    <property type="component" value="Segment"/>
</dbReference>
<dbReference type="GO" id="GO:0030430">
    <property type="term" value="C:host cell cytoplasm"/>
    <property type="evidence" value="ECO:0007669"/>
    <property type="project" value="UniProtKB-SubCell"/>
</dbReference>
<dbReference type="GO" id="GO:0044196">
    <property type="term" value="C:host cell nucleolus"/>
    <property type="evidence" value="ECO:0007669"/>
    <property type="project" value="UniProtKB-SubCell"/>
</dbReference>
<dbReference type="GO" id="GO:0003700">
    <property type="term" value="F:DNA-binding transcription factor activity"/>
    <property type="evidence" value="ECO:0007669"/>
    <property type="project" value="InterPro"/>
</dbReference>
<dbReference type="GO" id="GO:0003723">
    <property type="term" value="F:RNA binding"/>
    <property type="evidence" value="ECO:0007669"/>
    <property type="project" value="UniProtKB-KW"/>
</dbReference>
<dbReference type="GO" id="GO:0051028">
    <property type="term" value="P:mRNA transport"/>
    <property type="evidence" value="ECO:0007669"/>
    <property type="project" value="UniProtKB-KW"/>
</dbReference>
<dbReference type="Gene3D" id="6.10.140.630">
    <property type="match status" value="1"/>
</dbReference>
<dbReference type="InterPro" id="IPR000625">
    <property type="entry name" value="REV_protein"/>
</dbReference>
<dbReference type="Pfam" id="PF00424">
    <property type="entry name" value="REV"/>
    <property type="match status" value="1"/>
</dbReference>
<gene>
    <name type="primary">rev</name>
</gene>
<accession>P12486</accession>
<name>REV_SIVS4</name>
<feature type="chain" id="PRO_0000085301" description="Protein Rev">
    <location>
        <begin position="1"/>
        <end position="101"/>
    </location>
</feature>
<feature type="region of interest" description="Homomultimerization" evidence="1">
    <location>
        <begin position="14"/>
        <end position="23"/>
    </location>
</feature>
<feature type="region of interest" description="Disordered" evidence="2">
    <location>
        <begin position="19"/>
        <end position="40"/>
    </location>
</feature>
<feature type="region of interest" description="Disordered" evidence="2">
    <location>
        <begin position="81"/>
        <end position="101"/>
    </location>
</feature>
<feature type="short sequence motif" description="Nuclear localization signal and RNA-binding (RRE)" evidence="1">
    <location>
        <begin position="31"/>
        <end position="47"/>
    </location>
</feature>
<feature type="short sequence motif" description="Nuclear export signal" evidence="1">
    <location>
        <begin position="68"/>
        <end position="80"/>
    </location>
</feature>
<proteinExistence type="inferred from homology"/>